<protein>
    <recommendedName>
        <fullName evidence="1">Small ribosomal subunit protein uS5</fullName>
    </recommendedName>
    <alternativeName>
        <fullName evidence="2">30S ribosomal protein S5</fullName>
    </alternativeName>
</protein>
<comment type="function">
    <text evidence="1">With S4 and S12 plays an important role in translational accuracy.</text>
</comment>
<comment type="subunit">
    <text evidence="1">Part of the 30S ribosomal subunit. Contacts protein S4.</text>
</comment>
<comment type="domain">
    <text>The N-terminal domain interacts with the head of the 30S subunit; the C-terminal domain interacts with the body and contacts protein S4. The interaction surface between S4 and S5 is involved in control of translational fidelity.</text>
</comment>
<comment type="similarity">
    <text evidence="1">Belongs to the universal ribosomal protein uS5 family.</text>
</comment>
<gene>
    <name evidence="1" type="primary">rps5</name>
    <name type="ordered locus">APE_0346</name>
</gene>
<name>RS5_AERPE</name>
<dbReference type="EMBL" id="BA000002">
    <property type="protein sequence ID" value="BAA79301.1"/>
    <property type="molecule type" value="Genomic_DNA"/>
</dbReference>
<dbReference type="PIR" id="A72726">
    <property type="entry name" value="A72726"/>
</dbReference>
<dbReference type="RefSeq" id="WP_010865680.1">
    <property type="nucleotide sequence ID" value="NC_000854.2"/>
</dbReference>
<dbReference type="SMR" id="Q9YF95"/>
<dbReference type="STRING" id="272557.APE_0346"/>
<dbReference type="EnsemblBacteria" id="BAA79301">
    <property type="protein sequence ID" value="BAA79301"/>
    <property type="gene ID" value="APE_0346"/>
</dbReference>
<dbReference type="GeneID" id="1444564"/>
<dbReference type="KEGG" id="ape:APE_0346"/>
<dbReference type="PATRIC" id="fig|272557.25.peg.266"/>
<dbReference type="eggNOG" id="arCOG04087">
    <property type="taxonomic scope" value="Archaea"/>
</dbReference>
<dbReference type="Proteomes" id="UP000002518">
    <property type="component" value="Chromosome"/>
</dbReference>
<dbReference type="GO" id="GO:0022627">
    <property type="term" value="C:cytosolic small ribosomal subunit"/>
    <property type="evidence" value="ECO:0007669"/>
    <property type="project" value="TreeGrafter"/>
</dbReference>
<dbReference type="GO" id="GO:0019843">
    <property type="term" value="F:rRNA binding"/>
    <property type="evidence" value="ECO:0007669"/>
    <property type="project" value="UniProtKB-UniRule"/>
</dbReference>
<dbReference type="GO" id="GO:0003735">
    <property type="term" value="F:structural constituent of ribosome"/>
    <property type="evidence" value="ECO:0007669"/>
    <property type="project" value="InterPro"/>
</dbReference>
<dbReference type="GO" id="GO:0006412">
    <property type="term" value="P:translation"/>
    <property type="evidence" value="ECO:0007669"/>
    <property type="project" value="UniProtKB-UniRule"/>
</dbReference>
<dbReference type="FunFam" id="3.30.160.20:FF:000002">
    <property type="entry name" value="40S ribosomal protein S2"/>
    <property type="match status" value="1"/>
</dbReference>
<dbReference type="FunFam" id="3.30.230.10:FF:000004">
    <property type="entry name" value="40S ribosomal protein S2"/>
    <property type="match status" value="1"/>
</dbReference>
<dbReference type="Gene3D" id="3.30.160.20">
    <property type="match status" value="1"/>
</dbReference>
<dbReference type="Gene3D" id="3.30.230.10">
    <property type="match status" value="1"/>
</dbReference>
<dbReference type="HAMAP" id="MF_01307_A">
    <property type="entry name" value="Ribosomal_uS5_A"/>
    <property type="match status" value="1"/>
</dbReference>
<dbReference type="InterPro" id="IPR020568">
    <property type="entry name" value="Ribosomal_Su5_D2-typ_SF"/>
</dbReference>
<dbReference type="InterPro" id="IPR000851">
    <property type="entry name" value="Ribosomal_uS5"/>
</dbReference>
<dbReference type="InterPro" id="IPR047866">
    <property type="entry name" value="Ribosomal_uS5_arc"/>
</dbReference>
<dbReference type="InterPro" id="IPR005324">
    <property type="entry name" value="Ribosomal_uS5_C"/>
</dbReference>
<dbReference type="InterPro" id="IPR005711">
    <property type="entry name" value="Ribosomal_uS5_euk/arc"/>
</dbReference>
<dbReference type="InterPro" id="IPR013810">
    <property type="entry name" value="Ribosomal_uS5_N"/>
</dbReference>
<dbReference type="InterPro" id="IPR018192">
    <property type="entry name" value="Ribosomal_uS5_N_CS"/>
</dbReference>
<dbReference type="InterPro" id="IPR014721">
    <property type="entry name" value="Ribsml_uS5_D2-typ_fold_subgr"/>
</dbReference>
<dbReference type="NCBIfam" id="NF003125">
    <property type="entry name" value="PRK04044.1"/>
    <property type="match status" value="1"/>
</dbReference>
<dbReference type="NCBIfam" id="TIGR01020">
    <property type="entry name" value="uS5_euk_arch"/>
    <property type="match status" value="1"/>
</dbReference>
<dbReference type="PANTHER" id="PTHR13718:SF4">
    <property type="entry name" value="40S RIBOSOMAL PROTEIN S2"/>
    <property type="match status" value="1"/>
</dbReference>
<dbReference type="PANTHER" id="PTHR13718">
    <property type="entry name" value="RIBOSOMAL S SUBUNIT"/>
    <property type="match status" value="1"/>
</dbReference>
<dbReference type="Pfam" id="PF00333">
    <property type="entry name" value="Ribosomal_S5"/>
    <property type="match status" value="1"/>
</dbReference>
<dbReference type="Pfam" id="PF03719">
    <property type="entry name" value="Ribosomal_S5_C"/>
    <property type="match status" value="1"/>
</dbReference>
<dbReference type="SUPFAM" id="SSF54768">
    <property type="entry name" value="dsRNA-binding domain-like"/>
    <property type="match status" value="1"/>
</dbReference>
<dbReference type="SUPFAM" id="SSF54211">
    <property type="entry name" value="Ribosomal protein S5 domain 2-like"/>
    <property type="match status" value="1"/>
</dbReference>
<dbReference type="PROSITE" id="PS00585">
    <property type="entry name" value="RIBOSOMAL_S5"/>
    <property type="match status" value="1"/>
</dbReference>
<dbReference type="PROSITE" id="PS50881">
    <property type="entry name" value="S5_DSRBD"/>
    <property type="match status" value="1"/>
</dbReference>
<proteinExistence type="inferred from homology"/>
<organism>
    <name type="scientific">Aeropyrum pernix (strain ATCC 700893 / DSM 11879 / JCM 9820 / NBRC 100138 / K1)</name>
    <dbReference type="NCBI Taxonomy" id="272557"/>
    <lineage>
        <taxon>Archaea</taxon>
        <taxon>Thermoproteota</taxon>
        <taxon>Thermoprotei</taxon>
        <taxon>Desulfurococcales</taxon>
        <taxon>Desulfurococcaceae</taxon>
        <taxon>Aeropyrum</taxon>
    </lineage>
</organism>
<reference key="1">
    <citation type="journal article" date="1999" name="DNA Res.">
        <title>Complete genome sequence of an aerobic hyper-thermophilic crenarchaeon, Aeropyrum pernix K1.</title>
        <authorList>
            <person name="Kawarabayasi Y."/>
            <person name="Hino Y."/>
            <person name="Horikawa H."/>
            <person name="Yamazaki S."/>
            <person name="Haikawa Y."/>
            <person name="Jin-no K."/>
            <person name="Takahashi M."/>
            <person name="Sekine M."/>
            <person name="Baba S."/>
            <person name="Ankai A."/>
            <person name="Kosugi H."/>
            <person name="Hosoyama A."/>
            <person name="Fukui S."/>
            <person name="Nagai Y."/>
            <person name="Nishijima K."/>
            <person name="Nakazawa H."/>
            <person name="Takamiya M."/>
            <person name="Masuda S."/>
            <person name="Funahashi T."/>
            <person name="Tanaka T."/>
            <person name="Kudoh Y."/>
            <person name="Yamazaki J."/>
            <person name="Kushida N."/>
            <person name="Oguchi A."/>
            <person name="Aoki K."/>
            <person name="Kubota K."/>
            <person name="Nakamura Y."/>
            <person name="Nomura N."/>
            <person name="Sako Y."/>
            <person name="Kikuchi H."/>
        </authorList>
    </citation>
    <scope>NUCLEOTIDE SEQUENCE [LARGE SCALE GENOMIC DNA]</scope>
    <source>
        <strain>ATCC 700893 / DSM 11879 / JCM 9820 / NBRC 100138 / K1</strain>
    </source>
</reference>
<sequence length="218" mass="24243">MSQREAGQVDLEAWQPRTRVGRLVKEGKIKSIDEIFRRNLPILETEIVDYLLPGLDHEVIDVSIVQKMTDAGRITRFRAVVVVGNKDGYVGLGKGKARQFRFAIEKAIRNAKLNIIPVRRGCGSWECTCGEAHSVPFTVRGKSGSVEVILKPAPKGTGLVAGDVAKVVLRLAGISDVWTFTKGETRTSYNFARATYLALRNTYRFVTPADWAEARLRL</sequence>
<keyword id="KW-1185">Reference proteome</keyword>
<keyword id="KW-0687">Ribonucleoprotein</keyword>
<keyword id="KW-0689">Ribosomal protein</keyword>
<keyword id="KW-0694">RNA-binding</keyword>
<keyword id="KW-0699">rRNA-binding</keyword>
<accession>Q9YF95</accession>
<feature type="chain" id="PRO_0000131643" description="Small ribosomal subunit protein uS5">
    <location>
        <begin position="1"/>
        <end position="218"/>
    </location>
</feature>
<feature type="domain" description="S5 DRBM" evidence="1">
    <location>
        <begin position="55"/>
        <end position="118"/>
    </location>
</feature>
<evidence type="ECO:0000255" key="1">
    <source>
        <dbReference type="HAMAP-Rule" id="MF_01307"/>
    </source>
</evidence>
<evidence type="ECO:0000305" key="2"/>